<keyword id="KW-0067">ATP-binding</keyword>
<keyword id="KW-0547">Nucleotide-binding</keyword>
<keyword id="KW-0548">Nucleotidyltransferase</keyword>
<keyword id="KW-0808">Transferase</keyword>
<proteinExistence type="inferred from homology"/>
<evidence type="ECO:0000255" key="1">
    <source>
        <dbReference type="HAMAP-Rule" id="MF_00064"/>
    </source>
</evidence>
<evidence type="ECO:0000256" key="2">
    <source>
        <dbReference type="SAM" id="MobiDB-lite"/>
    </source>
</evidence>
<organism>
    <name type="scientific">Shewanella sp. (strain MR-4)</name>
    <dbReference type="NCBI Taxonomy" id="60480"/>
    <lineage>
        <taxon>Bacteria</taxon>
        <taxon>Pseudomonadati</taxon>
        <taxon>Pseudomonadota</taxon>
        <taxon>Gammaproteobacteria</taxon>
        <taxon>Alteromonadales</taxon>
        <taxon>Shewanellaceae</taxon>
        <taxon>Shewanella</taxon>
    </lineage>
</organism>
<name>CYSD_SHESM</name>
<feature type="chain" id="PRO_1000008990" description="Sulfate adenylyltransferase subunit 2">
    <location>
        <begin position="1"/>
        <end position="302"/>
    </location>
</feature>
<feature type="region of interest" description="Disordered" evidence="2">
    <location>
        <begin position="280"/>
        <end position="302"/>
    </location>
</feature>
<comment type="function">
    <text evidence="1">With CysN forms the ATP sulfurylase (ATPS) that catalyzes the adenylation of sulfate producing adenosine 5'-phosphosulfate (APS) and diphosphate, the first enzymatic step in sulfur assimilation pathway. APS synthesis involves the formation of a high-energy phosphoric-sulfuric acid anhydride bond driven by GTP hydrolysis by CysN coupled to ATP hydrolysis by CysD.</text>
</comment>
<comment type="catalytic activity">
    <reaction evidence="1">
        <text>sulfate + ATP + H(+) = adenosine 5'-phosphosulfate + diphosphate</text>
        <dbReference type="Rhea" id="RHEA:18133"/>
        <dbReference type="ChEBI" id="CHEBI:15378"/>
        <dbReference type="ChEBI" id="CHEBI:16189"/>
        <dbReference type="ChEBI" id="CHEBI:30616"/>
        <dbReference type="ChEBI" id="CHEBI:33019"/>
        <dbReference type="ChEBI" id="CHEBI:58243"/>
        <dbReference type="EC" id="2.7.7.4"/>
    </reaction>
</comment>
<comment type="pathway">
    <text evidence="1">Sulfur metabolism; hydrogen sulfide biosynthesis; sulfite from sulfate: step 1/3.</text>
</comment>
<comment type="subunit">
    <text evidence="1">Heterodimer composed of CysD, the smaller subunit, and CysN.</text>
</comment>
<comment type="similarity">
    <text evidence="1">Belongs to the PAPS reductase family. CysD subfamily.</text>
</comment>
<dbReference type="EC" id="2.7.7.4" evidence="1"/>
<dbReference type="EMBL" id="CP000446">
    <property type="protein sequence ID" value="ABI40143.1"/>
    <property type="molecule type" value="Genomic_DNA"/>
</dbReference>
<dbReference type="RefSeq" id="WP_011623816.1">
    <property type="nucleotide sequence ID" value="NC_008321.1"/>
</dbReference>
<dbReference type="SMR" id="Q0HFM4"/>
<dbReference type="GeneID" id="75187599"/>
<dbReference type="KEGG" id="she:Shewmr4_3072"/>
<dbReference type="HOGENOM" id="CLU_043026_0_0_6"/>
<dbReference type="UniPathway" id="UPA00140">
    <property type="reaction ID" value="UER00204"/>
</dbReference>
<dbReference type="GO" id="GO:0005524">
    <property type="term" value="F:ATP binding"/>
    <property type="evidence" value="ECO:0007669"/>
    <property type="project" value="UniProtKB-KW"/>
</dbReference>
<dbReference type="GO" id="GO:0004781">
    <property type="term" value="F:sulfate adenylyltransferase (ATP) activity"/>
    <property type="evidence" value="ECO:0007669"/>
    <property type="project" value="UniProtKB-UniRule"/>
</dbReference>
<dbReference type="GO" id="GO:0070814">
    <property type="term" value="P:hydrogen sulfide biosynthetic process"/>
    <property type="evidence" value="ECO:0007669"/>
    <property type="project" value="UniProtKB-UniRule"/>
</dbReference>
<dbReference type="GO" id="GO:0000103">
    <property type="term" value="P:sulfate assimilation"/>
    <property type="evidence" value="ECO:0007669"/>
    <property type="project" value="UniProtKB-UniRule"/>
</dbReference>
<dbReference type="CDD" id="cd23946">
    <property type="entry name" value="Sulfate_adenylyltransferase_2"/>
    <property type="match status" value="1"/>
</dbReference>
<dbReference type="FunFam" id="3.40.50.620:FF:000002">
    <property type="entry name" value="Sulfate adenylyltransferase subunit 2"/>
    <property type="match status" value="1"/>
</dbReference>
<dbReference type="Gene3D" id="3.40.50.620">
    <property type="entry name" value="HUPs"/>
    <property type="match status" value="1"/>
</dbReference>
<dbReference type="HAMAP" id="MF_00064">
    <property type="entry name" value="Sulf_adenylyltr_sub2"/>
    <property type="match status" value="1"/>
</dbReference>
<dbReference type="InterPro" id="IPR002500">
    <property type="entry name" value="PAPS_reduct_dom"/>
</dbReference>
<dbReference type="InterPro" id="IPR014729">
    <property type="entry name" value="Rossmann-like_a/b/a_fold"/>
</dbReference>
<dbReference type="InterPro" id="IPR011784">
    <property type="entry name" value="SO4_adenylTrfase_ssu"/>
</dbReference>
<dbReference type="InterPro" id="IPR050128">
    <property type="entry name" value="Sulfate_adenylyltrnsfr_sub2"/>
</dbReference>
<dbReference type="NCBIfam" id="TIGR02039">
    <property type="entry name" value="CysD"/>
    <property type="match status" value="1"/>
</dbReference>
<dbReference type="NCBIfam" id="NF003587">
    <property type="entry name" value="PRK05253.1"/>
    <property type="match status" value="1"/>
</dbReference>
<dbReference type="NCBIfam" id="NF009214">
    <property type="entry name" value="PRK12563.1"/>
    <property type="match status" value="1"/>
</dbReference>
<dbReference type="PANTHER" id="PTHR43196">
    <property type="entry name" value="SULFATE ADENYLYLTRANSFERASE SUBUNIT 2"/>
    <property type="match status" value="1"/>
</dbReference>
<dbReference type="PANTHER" id="PTHR43196:SF1">
    <property type="entry name" value="SULFATE ADENYLYLTRANSFERASE SUBUNIT 2"/>
    <property type="match status" value="1"/>
</dbReference>
<dbReference type="Pfam" id="PF01507">
    <property type="entry name" value="PAPS_reduct"/>
    <property type="match status" value="1"/>
</dbReference>
<dbReference type="PIRSF" id="PIRSF002936">
    <property type="entry name" value="CysDAde_trans"/>
    <property type="match status" value="1"/>
</dbReference>
<dbReference type="SUPFAM" id="SSF52402">
    <property type="entry name" value="Adenine nucleotide alpha hydrolases-like"/>
    <property type="match status" value="1"/>
</dbReference>
<accession>Q0HFM4</accession>
<protein>
    <recommendedName>
        <fullName evidence="1">Sulfate adenylyltransferase subunit 2</fullName>
        <ecNumber evidence="1">2.7.7.4</ecNumber>
    </recommendedName>
    <alternativeName>
        <fullName evidence="1">ATP-sulfurylase small subunit</fullName>
    </alternativeName>
    <alternativeName>
        <fullName evidence="1">Sulfate adenylate transferase</fullName>
        <shortName evidence="1">SAT</shortName>
    </alternativeName>
</protein>
<reference key="1">
    <citation type="submission" date="2006-08" db="EMBL/GenBank/DDBJ databases">
        <title>Complete sequence of Shewanella sp. MR-4.</title>
        <authorList>
            <consortium name="US DOE Joint Genome Institute"/>
            <person name="Copeland A."/>
            <person name="Lucas S."/>
            <person name="Lapidus A."/>
            <person name="Barry K."/>
            <person name="Detter J.C."/>
            <person name="Glavina del Rio T."/>
            <person name="Hammon N."/>
            <person name="Israni S."/>
            <person name="Dalin E."/>
            <person name="Tice H."/>
            <person name="Pitluck S."/>
            <person name="Kiss H."/>
            <person name="Brettin T."/>
            <person name="Bruce D."/>
            <person name="Han C."/>
            <person name="Tapia R."/>
            <person name="Gilna P."/>
            <person name="Schmutz J."/>
            <person name="Larimer F."/>
            <person name="Land M."/>
            <person name="Hauser L."/>
            <person name="Kyrpides N."/>
            <person name="Mikhailova N."/>
            <person name="Nealson K."/>
            <person name="Konstantinidis K."/>
            <person name="Klappenbach J."/>
            <person name="Tiedje J."/>
            <person name="Richardson P."/>
        </authorList>
    </citation>
    <scope>NUCLEOTIDE SEQUENCE [LARGE SCALE GENOMIC DNA]</scope>
    <source>
        <strain>MR-4</strain>
    </source>
</reference>
<gene>
    <name evidence="1" type="primary">cysD</name>
    <name type="ordered locus">Shewmr4_3072</name>
</gene>
<sequence>MAGRELSHLQQLEAESIQIIREVAAEFDNPVMLYSIGKDSSVMLHLARKAFYPGKIPFPLLHVDTGWKFKEMIAFRDAQAKKFGFELLTHTNPEGVAQGINPFDHGSAKHTDIMKTQGLKQALNQYGFDAAFGGARRDEEKSRAKERVYSFRDRHHRWDPKNQRPELWRTYNGAVNKGESIRVFPLSNWTELDIWQYIYQENIELVPLYFAAERPVVERGGQLIMADDERMKLEEGETIKHEVVRFRTLGCYPLTAAMHSQADNLEKIIEEMLLTRSSERQGRLIDSDQSASMEQKKRQGYF</sequence>